<comment type="similarity">
    <text evidence="2">Belongs to the glutathione peroxidase family.</text>
</comment>
<organism>
    <name type="scientific">Bacillus subtilis (strain 168)</name>
    <dbReference type="NCBI Taxonomy" id="224308"/>
    <lineage>
        <taxon>Bacteria</taxon>
        <taxon>Bacillati</taxon>
        <taxon>Bacillota</taxon>
        <taxon>Bacilli</taxon>
        <taxon>Bacillales</taxon>
        <taxon>Bacillaceae</taxon>
        <taxon>Bacillus</taxon>
    </lineage>
</organism>
<dbReference type="EC" id="1.-.-.-"/>
<dbReference type="EMBL" id="L77246">
    <property type="protein sequence ID" value="AAA96626.1"/>
    <property type="molecule type" value="Genomic_DNA"/>
</dbReference>
<dbReference type="EMBL" id="AL009126">
    <property type="protein sequence ID" value="CAB14108.1"/>
    <property type="molecule type" value="Genomic_DNA"/>
</dbReference>
<dbReference type="PIR" id="E69596">
    <property type="entry name" value="E69596"/>
</dbReference>
<dbReference type="RefSeq" id="NP_390073.1">
    <property type="nucleotide sequence ID" value="NC_000964.3"/>
</dbReference>
<dbReference type="RefSeq" id="WP_003230784.1">
    <property type="nucleotide sequence ID" value="NZ_OZ025638.1"/>
</dbReference>
<dbReference type="SMR" id="P52035"/>
<dbReference type="FunCoup" id="P52035">
    <property type="interactions" value="410"/>
</dbReference>
<dbReference type="STRING" id="224308.BSU21900"/>
<dbReference type="PeroxiBase" id="3984">
    <property type="entry name" value="BsGPx01_Marburg"/>
</dbReference>
<dbReference type="PaxDb" id="224308-BSU21900"/>
<dbReference type="EnsemblBacteria" id="CAB14108">
    <property type="protein sequence ID" value="CAB14108"/>
    <property type="gene ID" value="BSU_21900"/>
</dbReference>
<dbReference type="GeneID" id="939086"/>
<dbReference type="KEGG" id="bsu:BSU21900"/>
<dbReference type="PATRIC" id="fig|224308.179.peg.2392"/>
<dbReference type="eggNOG" id="COG0386">
    <property type="taxonomic scope" value="Bacteria"/>
</dbReference>
<dbReference type="InParanoid" id="P52035"/>
<dbReference type="OrthoDB" id="9789406at2"/>
<dbReference type="PhylomeDB" id="P52035"/>
<dbReference type="BioCyc" id="BSUB:BSU21900-MONOMER"/>
<dbReference type="Proteomes" id="UP000001570">
    <property type="component" value="Chromosome"/>
</dbReference>
<dbReference type="GO" id="GO:0004601">
    <property type="term" value="F:peroxidase activity"/>
    <property type="evidence" value="ECO:0007669"/>
    <property type="project" value="UniProtKB-KW"/>
</dbReference>
<dbReference type="GO" id="GO:0034599">
    <property type="term" value="P:cellular response to oxidative stress"/>
    <property type="evidence" value="ECO:0000318"/>
    <property type="project" value="GO_Central"/>
</dbReference>
<dbReference type="CDD" id="cd00340">
    <property type="entry name" value="GSH_Peroxidase"/>
    <property type="match status" value="1"/>
</dbReference>
<dbReference type="FunFam" id="3.40.30.10:FF:000010">
    <property type="entry name" value="Glutathione peroxidase"/>
    <property type="match status" value="1"/>
</dbReference>
<dbReference type="Gene3D" id="3.40.30.10">
    <property type="entry name" value="Glutaredoxin"/>
    <property type="match status" value="1"/>
</dbReference>
<dbReference type="InterPro" id="IPR000889">
    <property type="entry name" value="Glutathione_peroxidase"/>
</dbReference>
<dbReference type="InterPro" id="IPR029759">
    <property type="entry name" value="GPX_AS"/>
</dbReference>
<dbReference type="InterPro" id="IPR029760">
    <property type="entry name" value="GPX_CS"/>
</dbReference>
<dbReference type="InterPro" id="IPR036249">
    <property type="entry name" value="Thioredoxin-like_sf"/>
</dbReference>
<dbReference type="PANTHER" id="PTHR11592">
    <property type="entry name" value="GLUTATHIONE PEROXIDASE"/>
    <property type="match status" value="1"/>
</dbReference>
<dbReference type="PANTHER" id="PTHR11592:SF78">
    <property type="entry name" value="GLUTATHIONE PEROXIDASE"/>
    <property type="match status" value="1"/>
</dbReference>
<dbReference type="Pfam" id="PF00255">
    <property type="entry name" value="GSHPx"/>
    <property type="match status" value="1"/>
</dbReference>
<dbReference type="PIRSF" id="PIRSF000303">
    <property type="entry name" value="Glutathion_perox"/>
    <property type="match status" value="1"/>
</dbReference>
<dbReference type="PRINTS" id="PR01011">
    <property type="entry name" value="GLUTPROXDASE"/>
</dbReference>
<dbReference type="SUPFAM" id="SSF52833">
    <property type="entry name" value="Thioredoxin-like"/>
    <property type="match status" value="1"/>
</dbReference>
<dbReference type="PROSITE" id="PS00460">
    <property type="entry name" value="GLUTATHIONE_PEROXID_1"/>
    <property type="match status" value="1"/>
</dbReference>
<dbReference type="PROSITE" id="PS00763">
    <property type="entry name" value="GLUTATHIONE_PEROXID_2"/>
    <property type="match status" value="1"/>
</dbReference>
<dbReference type="PROSITE" id="PS51355">
    <property type="entry name" value="GLUTATHIONE_PEROXID_3"/>
    <property type="match status" value="1"/>
</dbReference>
<gene>
    <name type="primary">bsaA</name>
    <name type="ordered locus">BSU21900</name>
</gene>
<protein>
    <recommendedName>
        <fullName>Glutathione peroxidase homolog BsaA</fullName>
        <ecNumber>1.-.-.-</ecNumber>
    </recommendedName>
</protein>
<feature type="chain" id="PRO_0000066649" description="Glutathione peroxidase homolog BsaA">
    <location>
        <begin position="1"/>
        <end position="160"/>
    </location>
</feature>
<feature type="active site" evidence="1">
    <location>
        <position position="35"/>
    </location>
</feature>
<sequence>MSIYHMKVRTITGKDMTLQPFAGKVLMIVNTASKCGFTSQLKQLQELYDTYQQEGLEILGFPCNQFMNQEPGEEADIQEFCETNYGVTFPMFSKVDVNGKNAHPLFVYLTEHAKGMLGTKAIKWNFTKFIVDRNGEIVGRYSPNTNPKELEDDIVKLLEQ</sequence>
<accession>P52035</accession>
<reference key="1">
    <citation type="journal article" date="1996" name="Microbiology">
        <title>Organization of the Bacillus subtilis 168 chromosome between kdg and the attachment site of the SP beta prophage: use of long accurate PCR and yeast artificial chromosomes for sequencing.</title>
        <authorList>
            <person name="Capuano V."/>
            <person name="Galleron N."/>
            <person name="Pujic P."/>
            <person name="Sorokin A."/>
            <person name="Ehrlich S.D."/>
        </authorList>
    </citation>
    <scope>NUCLEOTIDE SEQUENCE [GENOMIC DNA]</scope>
    <source>
        <strain>168 / Marburg / ATCC 6051 / DSM 10 / JCM 1465 / NBRC 13719 / NCIMB 3610 / NRRL NRS-744 / VKM B-501</strain>
    </source>
</reference>
<reference key="2">
    <citation type="journal article" date="1997" name="Nature">
        <title>The complete genome sequence of the Gram-positive bacterium Bacillus subtilis.</title>
        <authorList>
            <person name="Kunst F."/>
            <person name="Ogasawara N."/>
            <person name="Moszer I."/>
            <person name="Albertini A.M."/>
            <person name="Alloni G."/>
            <person name="Azevedo V."/>
            <person name="Bertero M.G."/>
            <person name="Bessieres P."/>
            <person name="Bolotin A."/>
            <person name="Borchert S."/>
            <person name="Borriss R."/>
            <person name="Boursier L."/>
            <person name="Brans A."/>
            <person name="Braun M."/>
            <person name="Brignell S.C."/>
            <person name="Bron S."/>
            <person name="Brouillet S."/>
            <person name="Bruschi C.V."/>
            <person name="Caldwell B."/>
            <person name="Capuano V."/>
            <person name="Carter N.M."/>
            <person name="Choi S.-K."/>
            <person name="Codani J.-J."/>
            <person name="Connerton I.F."/>
            <person name="Cummings N.J."/>
            <person name="Daniel R.A."/>
            <person name="Denizot F."/>
            <person name="Devine K.M."/>
            <person name="Duesterhoeft A."/>
            <person name="Ehrlich S.D."/>
            <person name="Emmerson P.T."/>
            <person name="Entian K.-D."/>
            <person name="Errington J."/>
            <person name="Fabret C."/>
            <person name="Ferrari E."/>
            <person name="Foulger D."/>
            <person name="Fritz C."/>
            <person name="Fujita M."/>
            <person name="Fujita Y."/>
            <person name="Fuma S."/>
            <person name="Galizzi A."/>
            <person name="Galleron N."/>
            <person name="Ghim S.-Y."/>
            <person name="Glaser P."/>
            <person name="Goffeau A."/>
            <person name="Golightly E.J."/>
            <person name="Grandi G."/>
            <person name="Guiseppi G."/>
            <person name="Guy B.J."/>
            <person name="Haga K."/>
            <person name="Haiech J."/>
            <person name="Harwood C.R."/>
            <person name="Henaut A."/>
            <person name="Hilbert H."/>
            <person name="Holsappel S."/>
            <person name="Hosono S."/>
            <person name="Hullo M.-F."/>
            <person name="Itaya M."/>
            <person name="Jones L.-M."/>
            <person name="Joris B."/>
            <person name="Karamata D."/>
            <person name="Kasahara Y."/>
            <person name="Klaerr-Blanchard M."/>
            <person name="Klein C."/>
            <person name="Kobayashi Y."/>
            <person name="Koetter P."/>
            <person name="Koningstein G."/>
            <person name="Krogh S."/>
            <person name="Kumano M."/>
            <person name="Kurita K."/>
            <person name="Lapidus A."/>
            <person name="Lardinois S."/>
            <person name="Lauber J."/>
            <person name="Lazarevic V."/>
            <person name="Lee S.-M."/>
            <person name="Levine A."/>
            <person name="Liu H."/>
            <person name="Masuda S."/>
            <person name="Mauel C."/>
            <person name="Medigue C."/>
            <person name="Medina N."/>
            <person name="Mellado R.P."/>
            <person name="Mizuno M."/>
            <person name="Moestl D."/>
            <person name="Nakai S."/>
            <person name="Noback M."/>
            <person name="Noone D."/>
            <person name="O'Reilly M."/>
            <person name="Ogawa K."/>
            <person name="Ogiwara A."/>
            <person name="Oudega B."/>
            <person name="Park S.-H."/>
            <person name="Parro V."/>
            <person name="Pohl T.M."/>
            <person name="Portetelle D."/>
            <person name="Porwollik S."/>
            <person name="Prescott A.M."/>
            <person name="Presecan E."/>
            <person name="Pujic P."/>
            <person name="Purnelle B."/>
            <person name="Rapoport G."/>
            <person name="Rey M."/>
            <person name="Reynolds S."/>
            <person name="Rieger M."/>
            <person name="Rivolta C."/>
            <person name="Rocha E."/>
            <person name="Roche B."/>
            <person name="Rose M."/>
            <person name="Sadaie Y."/>
            <person name="Sato T."/>
            <person name="Scanlan E."/>
            <person name="Schleich S."/>
            <person name="Schroeter R."/>
            <person name="Scoffone F."/>
            <person name="Sekiguchi J."/>
            <person name="Sekowska A."/>
            <person name="Seror S.J."/>
            <person name="Serror P."/>
            <person name="Shin B.-S."/>
            <person name="Soldo B."/>
            <person name="Sorokin A."/>
            <person name="Tacconi E."/>
            <person name="Takagi T."/>
            <person name="Takahashi H."/>
            <person name="Takemaru K."/>
            <person name="Takeuchi M."/>
            <person name="Tamakoshi A."/>
            <person name="Tanaka T."/>
            <person name="Terpstra P."/>
            <person name="Tognoni A."/>
            <person name="Tosato V."/>
            <person name="Uchiyama S."/>
            <person name="Vandenbol M."/>
            <person name="Vannier F."/>
            <person name="Vassarotti A."/>
            <person name="Viari A."/>
            <person name="Wambutt R."/>
            <person name="Wedler E."/>
            <person name="Wedler H."/>
            <person name="Weitzenegger T."/>
            <person name="Winters P."/>
            <person name="Wipat A."/>
            <person name="Yamamoto H."/>
            <person name="Yamane K."/>
            <person name="Yasumoto K."/>
            <person name="Yata K."/>
            <person name="Yoshida K."/>
            <person name="Yoshikawa H.-F."/>
            <person name="Zumstein E."/>
            <person name="Yoshikawa H."/>
            <person name="Danchin A."/>
        </authorList>
    </citation>
    <scope>NUCLEOTIDE SEQUENCE [LARGE SCALE GENOMIC DNA]</scope>
    <source>
        <strain>168</strain>
    </source>
</reference>
<proteinExistence type="inferred from homology"/>
<keyword id="KW-0560">Oxidoreductase</keyword>
<keyword id="KW-0575">Peroxidase</keyword>
<keyword id="KW-1185">Reference proteome</keyword>
<evidence type="ECO:0000250" key="1"/>
<evidence type="ECO:0000305" key="2"/>
<name>BSAA_BACSU</name>